<keyword id="KW-0687">Ribonucleoprotein</keyword>
<keyword id="KW-0689">Ribosomal protein</keyword>
<keyword id="KW-0694">RNA-binding</keyword>
<keyword id="KW-0699">rRNA-binding</keyword>
<reference key="1">
    <citation type="journal article" date="2008" name="J. Bacteriol.">
        <title>Genome sequence of Lactobacillus helveticus: an organism distinguished by selective gene loss and IS element expansion.</title>
        <authorList>
            <person name="Callanan M."/>
            <person name="Kaleta P."/>
            <person name="O'Callaghan J."/>
            <person name="O'Sullivan O."/>
            <person name="Jordan K."/>
            <person name="McAuliffe O."/>
            <person name="Sangrador-Vegas A."/>
            <person name="Slattery L."/>
            <person name="Fitzgerald G.F."/>
            <person name="Beresford T."/>
            <person name="Ross R.P."/>
        </authorList>
    </citation>
    <scope>NUCLEOTIDE SEQUENCE [LARGE SCALE GENOMIC DNA]</scope>
    <source>
        <strain>DPC 4571</strain>
    </source>
</reference>
<accession>A8YXM2</accession>
<organism>
    <name type="scientific">Lactobacillus helveticus (strain DPC 4571)</name>
    <dbReference type="NCBI Taxonomy" id="405566"/>
    <lineage>
        <taxon>Bacteria</taxon>
        <taxon>Bacillati</taxon>
        <taxon>Bacillota</taxon>
        <taxon>Bacilli</taxon>
        <taxon>Lactobacillales</taxon>
        <taxon>Lactobacillaceae</taxon>
        <taxon>Lactobacillus</taxon>
    </lineage>
</organism>
<protein>
    <recommendedName>
        <fullName evidence="1">Small ribosomal subunit protein uS5</fullName>
    </recommendedName>
    <alternativeName>
        <fullName evidence="2">30S ribosomal protein S5</fullName>
    </alternativeName>
</protein>
<comment type="function">
    <text evidence="1">With S4 and S12 plays an important role in translational accuracy.</text>
</comment>
<comment type="function">
    <text evidence="1">Located at the back of the 30S subunit body where it stabilizes the conformation of the head with respect to the body.</text>
</comment>
<comment type="subunit">
    <text evidence="1">Part of the 30S ribosomal subunit. Contacts proteins S4 and S8.</text>
</comment>
<comment type="domain">
    <text>The N-terminal domain interacts with the head of the 30S subunit; the C-terminal domain interacts with the body and contacts protein S4. The interaction surface between S4 and S5 is involved in control of translational fidelity.</text>
</comment>
<comment type="similarity">
    <text evidence="1">Belongs to the universal ribosomal protein uS5 family.</text>
</comment>
<gene>
    <name evidence="1" type="primary">rpsE</name>
    <name type="ordered locus">lhv_0329</name>
</gene>
<sequence>MANRNDSRNNRRNKDDIEDQLVAVNRITKVVKGGRRMRFAALVVVGDKKGRVGFGTGKAQEVPEAIRKAVEDGKKKMINVPKVGTTIPHEVIGHYGSGNILLKPAEAGSGVAAGGAVRIVMDMAGISDVTSKSLGSNTPINVVRATIDGLKKLRTSEEVNKLRQPERA</sequence>
<name>RS5_LACH4</name>
<proteinExistence type="inferred from homology"/>
<evidence type="ECO:0000255" key="1">
    <source>
        <dbReference type="HAMAP-Rule" id="MF_01307"/>
    </source>
</evidence>
<evidence type="ECO:0000305" key="2"/>
<dbReference type="EMBL" id="CP000517">
    <property type="protein sequence ID" value="ABX26553.1"/>
    <property type="molecule type" value="Genomic_DNA"/>
</dbReference>
<dbReference type="RefSeq" id="WP_003625807.1">
    <property type="nucleotide sequence ID" value="NC_010080.1"/>
</dbReference>
<dbReference type="SMR" id="A8YXM2"/>
<dbReference type="GeneID" id="83725530"/>
<dbReference type="KEGG" id="lhe:lhv_0329"/>
<dbReference type="eggNOG" id="COG0098">
    <property type="taxonomic scope" value="Bacteria"/>
</dbReference>
<dbReference type="HOGENOM" id="CLU_065898_2_2_9"/>
<dbReference type="Proteomes" id="UP000000790">
    <property type="component" value="Chromosome"/>
</dbReference>
<dbReference type="GO" id="GO:0015935">
    <property type="term" value="C:small ribosomal subunit"/>
    <property type="evidence" value="ECO:0007669"/>
    <property type="project" value="InterPro"/>
</dbReference>
<dbReference type="GO" id="GO:0019843">
    <property type="term" value="F:rRNA binding"/>
    <property type="evidence" value="ECO:0007669"/>
    <property type="project" value="UniProtKB-UniRule"/>
</dbReference>
<dbReference type="GO" id="GO:0003735">
    <property type="term" value="F:structural constituent of ribosome"/>
    <property type="evidence" value="ECO:0007669"/>
    <property type="project" value="InterPro"/>
</dbReference>
<dbReference type="GO" id="GO:0006412">
    <property type="term" value="P:translation"/>
    <property type="evidence" value="ECO:0007669"/>
    <property type="project" value="UniProtKB-UniRule"/>
</dbReference>
<dbReference type="FunFam" id="3.30.160.20:FF:000001">
    <property type="entry name" value="30S ribosomal protein S5"/>
    <property type="match status" value="1"/>
</dbReference>
<dbReference type="FunFam" id="3.30.230.10:FF:000002">
    <property type="entry name" value="30S ribosomal protein S5"/>
    <property type="match status" value="1"/>
</dbReference>
<dbReference type="Gene3D" id="3.30.160.20">
    <property type="match status" value="1"/>
</dbReference>
<dbReference type="Gene3D" id="3.30.230.10">
    <property type="match status" value="1"/>
</dbReference>
<dbReference type="HAMAP" id="MF_01307_B">
    <property type="entry name" value="Ribosomal_uS5_B"/>
    <property type="match status" value="1"/>
</dbReference>
<dbReference type="InterPro" id="IPR020568">
    <property type="entry name" value="Ribosomal_Su5_D2-typ_SF"/>
</dbReference>
<dbReference type="InterPro" id="IPR000851">
    <property type="entry name" value="Ribosomal_uS5"/>
</dbReference>
<dbReference type="InterPro" id="IPR005712">
    <property type="entry name" value="Ribosomal_uS5_bac-type"/>
</dbReference>
<dbReference type="InterPro" id="IPR005324">
    <property type="entry name" value="Ribosomal_uS5_C"/>
</dbReference>
<dbReference type="InterPro" id="IPR013810">
    <property type="entry name" value="Ribosomal_uS5_N"/>
</dbReference>
<dbReference type="InterPro" id="IPR018192">
    <property type="entry name" value="Ribosomal_uS5_N_CS"/>
</dbReference>
<dbReference type="InterPro" id="IPR014721">
    <property type="entry name" value="Ribsml_uS5_D2-typ_fold_subgr"/>
</dbReference>
<dbReference type="NCBIfam" id="TIGR01021">
    <property type="entry name" value="rpsE_bact"/>
    <property type="match status" value="1"/>
</dbReference>
<dbReference type="PANTHER" id="PTHR48277">
    <property type="entry name" value="MITOCHONDRIAL RIBOSOMAL PROTEIN S5"/>
    <property type="match status" value="1"/>
</dbReference>
<dbReference type="PANTHER" id="PTHR48277:SF1">
    <property type="entry name" value="MITOCHONDRIAL RIBOSOMAL PROTEIN S5"/>
    <property type="match status" value="1"/>
</dbReference>
<dbReference type="Pfam" id="PF00333">
    <property type="entry name" value="Ribosomal_S5"/>
    <property type="match status" value="1"/>
</dbReference>
<dbReference type="Pfam" id="PF03719">
    <property type="entry name" value="Ribosomal_S5_C"/>
    <property type="match status" value="1"/>
</dbReference>
<dbReference type="SUPFAM" id="SSF54768">
    <property type="entry name" value="dsRNA-binding domain-like"/>
    <property type="match status" value="1"/>
</dbReference>
<dbReference type="SUPFAM" id="SSF54211">
    <property type="entry name" value="Ribosomal protein S5 domain 2-like"/>
    <property type="match status" value="1"/>
</dbReference>
<dbReference type="PROSITE" id="PS00585">
    <property type="entry name" value="RIBOSOMAL_S5"/>
    <property type="match status" value="1"/>
</dbReference>
<dbReference type="PROSITE" id="PS50881">
    <property type="entry name" value="S5_DSRBD"/>
    <property type="match status" value="1"/>
</dbReference>
<feature type="chain" id="PRO_0000323142" description="Small ribosomal subunit protein uS5">
    <location>
        <begin position="1"/>
        <end position="168"/>
    </location>
</feature>
<feature type="domain" description="S5 DRBM" evidence="1">
    <location>
        <begin position="17"/>
        <end position="80"/>
    </location>
</feature>